<name>LPTD_BURCH</name>
<proteinExistence type="inferred from homology"/>
<sequence>MPPKPLFPNVFPGDGAPRKRRLALALLAVPGLVPAVSYAQLSGAAAQPQPLDSPWDLRLAPQLEDHPLKDGAKPAAFVIADHTSGTAEQDLAAKGSAELRRGDAVVKADAIHYDQDTDMADAYGQVKVINGGTSFAGPEAHLKIEANQGFMTAPKYHFNVTGGSGSAERVDMVDNERSVFVNGTYTACQCSTNPAWYIKGSRFDFDTGADEGTARNGVLFFQGVPIFASPWMTFPLSGERRSGLLPPTFSMNSSNGFELSLPYYFNIAPNRDLTLTPRIISRRGVMTEATFRYLSPSYSGTFTANYLPDDRLAHRNRYAIYWQHQQNFGGGFGGYVYYNKVSDNTYPEDLGSANQFINGTQTLYQQEAGLTYNNGPWSVLARYQHWQTLPPSIAPYSREPQLNVKYTKYNVGGFDFGAEADYSRFRITTADATEGDRIVFNPYISYGVYGPGYFVVPKVQYHFASYDLNYLSSTTPNSPKRFTESIPTVTFDTGLIFDRSVRLFGQDFIQTLEPRLYYVYTPYRDQSNAPLFDTAESDFGLAEIYQPNTFVGNDRIADANRITAGLTSRFIDPRTGDERARFVIAQQYYFADQRVTLNPGQAAVLARHSDLIVGAALKLGSGFMSETAFQYNQNNNQLVKSSVGFGYSPGERRVINVGYRYTRANTTLDNQPINQFLVSAQWPLTRRLYAIGRFNYDLAGDRVVDGLVGLQYDADCWALGVGVQRAANGINSSGQQNSSTRFMMQLTLKGLSTVDNGLVSAFRAGVPGYTPLPPPPPPMSRFSNYE</sequence>
<accession>A0KAD4</accession>
<organism>
    <name type="scientific">Burkholderia cenocepacia (strain HI2424)</name>
    <dbReference type="NCBI Taxonomy" id="331272"/>
    <lineage>
        <taxon>Bacteria</taxon>
        <taxon>Pseudomonadati</taxon>
        <taxon>Pseudomonadota</taxon>
        <taxon>Betaproteobacteria</taxon>
        <taxon>Burkholderiales</taxon>
        <taxon>Burkholderiaceae</taxon>
        <taxon>Burkholderia</taxon>
        <taxon>Burkholderia cepacia complex</taxon>
    </lineage>
</organism>
<evidence type="ECO:0000255" key="1">
    <source>
        <dbReference type="HAMAP-Rule" id="MF_01411"/>
    </source>
</evidence>
<evidence type="ECO:0000256" key="2">
    <source>
        <dbReference type="SAM" id="MobiDB-lite"/>
    </source>
</evidence>
<reference key="1">
    <citation type="submission" date="2006-08" db="EMBL/GenBank/DDBJ databases">
        <title>Complete sequence of chromosome 1 of Burkholderia cenocepacia HI2424.</title>
        <authorList>
            <person name="Copeland A."/>
            <person name="Lucas S."/>
            <person name="Lapidus A."/>
            <person name="Barry K."/>
            <person name="Detter J.C."/>
            <person name="Glavina del Rio T."/>
            <person name="Hammon N."/>
            <person name="Israni S."/>
            <person name="Pitluck S."/>
            <person name="Chain P."/>
            <person name="Malfatti S."/>
            <person name="Shin M."/>
            <person name="Vergez L."/>
            <person name="Schmutz J."/>
            <person name="Larimer F."/>
            <person name="Land M."/>
            <person name="Hauser L."/>
            <person name="Kyrpides N."/>
            <person name="Kim E."/>
            <person name="LiPuma J.J."/>
            <person name="Gonzalez C.F."/>
            <person name="Konstantinidis K."/>
            <person name="Tiedje J.M."/>
            <person name="Richardson P."/>
        </authorList>
    </citation>
    <scope>NUCLEOTIDE SEQUENCE [LARGE SCALE GENOMIC DNA]</scope>
    <source>
        <strain>HI2424</strain>
    </source>
</reference>
<gene>
    <name evidence="1" type="primary">lptD</name>
    <name type="synonym">imp</name>
    <name type="synonym">ostA</name>
    <name type="ordered locus">Bcen2424_2711</name>
</gene>
<dbReference type="EMBL" id="CP000458">
    <property type="protein sequence ID" value="ABK09461.1"/>
    <property type="molecule type" value="Genomic_DNA"/>
</dbReference>
<dbReference type="RefSeq" id="WP_011546173.1">
    <property type="nucleotide sequence ID" value="NC_008542.1"/>
</dbReference>
<dbReference type="SMR" id="A0KAD4"/>
<dbReference type="KEGG" id="bch:Bcen2424_2711"/>
<dbReference type="HOGENOM" id="CLU_009039_0_0_4"/>
<dbReference type="GO" id="GO:0009279">
    <property type="term" value="C:cell outer membrane"/>
    <property type="evidence" value="ECO:0007669"/>
    <property type="project" value="UniProtKB-SubCell"/>
</dbReference>
<dbReference type="GO" id="GO:1990351">
    <property type="term" value="C:transporter complex"/>
    <property type="evidence" value="ECO:0007669"/>
    <property type="project" value="TreeGrafter"/>
</dbReference>
<dbReference type="GO" id="GO:0043165">
    <property type="term" value="P:Gram-negative-bacterium-type cell outer membrane assembly"/>
    <property type="evidence" value="ECO:0007669"/>
    <property type="project" value="UniProtKB-UniRule"/>
</dbReference>
<dbReference type="GO" id="GO:0015920">
    <property type="term" value="P:lipopolysaccharide transport"/>
    <property type="evidence" value="ECO:0007669"/>
    <property type="project" value="InterPro"/>
</dbReference>
<dbReference type="HAMAP" id="MF_01411">
    <property type="entry name" value="LPS_assembly_LptD"/>
    <property type="match status" value="1"/>
</dbReference>
<dbReference type="InterPro" id="IPR020889">
    <property type="entry name" value="LipoPS_assembly_LptD"/>
</dbReference>
<dbReference type="InterPro" id="IPR050218">
    <property type="entry name" value="LptD"/>
</dbReference>
<dbReference type="InterPro" id="IPR007543">
    <property type="entry name" value="LptD_C"/>
</dbReference>
<dbReference type="PANTHER" id="PTHR30189">
    <property type="entry name" value="LPS-ASSEMBLY PROTEIN"/>
    <property type="match status" value="1"/>
</dbReference>
<dbReference type="PANTHER" id="PTHR30189:SF1">
    <property type="entry name" value="LPS-ASSEMBLY PROTEIN LPTD"/>
    <property type="match status" value="1"/>
</dbReference>
<dbReference type="Pfam" id="PF04453">
    <property type="entry name" value="LptD"/>
    <property type="match status" value="1"/>
</dbReference>
<keyword id="KW-0998">Cell outer membrane</keyword>
<keyword id="KW-0472">Membrane</keyword>
<keyword id="KW-0732">Signal</keyword>
<feature type="signal peptide" evidence="1">
    <location>
        <begin position="1"/>
        <end position="39"/>
    </location>
</feature>
<feature type="chain" id="PRO_5000165002" description="LPS-assembly protein LptD">
    <location>
        <begin position="40"/>
        <end position="786"/>
    </location>
</feature>
<feature type="region of interest" description="Disordered" evidence="2">
    <location>
        <begin position="767"/>
        <end position="786"/>
    </location>
</feature>
<feature type="compositionally biased region" description="Pro residues" evidence="2">
    <location>
        <begin position="770"/>
        <end position="779"/>
    </location>
</feature>
<comment type="function">
    <text evidence="1">Together with LptE, is involved in the assembly of lipopolysaccharide (LPS) at the surface of the outer membrane.</text>
</comment>
<comment type="subunit">
    <text evidence="1">Component of the lipopolysaccharide transport and assembly complex. Interacts with LptE and LptA.</text>
</comment>
<comment type="subcellular location">
    <subcellularLocation>
        <location evidence="1">Cell outer membrane</location>
    </subcellularLocation>
</comment>
<comment type="similarity">
    <text evidence="1">Belongs to the LptD family.</text>
</comment>
<protein>
    <recommendedName>
        <fullName evidence="1">LPS-assembly protein LptD</fullName>
    </recommendedName>
</protein>